<reference key="1">
    <citation type="submission" date="2005-10" db="EMBL/GenBank/DDBJ databases">
        <title>Complete sequence of chromosome 1 of Burkholderia sp. 383.</title>
        <authorList>
            <consortium name="US DOE Joint Genome Institute"/>
            <person name="Copeland A."/>
            <person name="Lucas S."/>
            <person name="Lapidus A."/>
            <person name="Barry K."/>
            <person name="Detter J.C."/>
            <person name="Glavina T."/>
            <person name="Hammon N."/>
            <person name="Israni S."/>
            <person name="Pitluck S."/>
            <person name="Chain P."/>
            <person name="Malfatti S."/>
            <person name="Shin M."/>
            <person name="Vergez L."/>
            <person name="Schmutz J."/>
            <person name="Larimer F."/>
            <person name="Land M."/>
            <person name="Kyrpides N."/>
            <person name="Lykidis A."/>
            <person name="Richardson P."/>
        </authorList>
    </citation>
    <scope>NUCLEOTIDE SEQUENCE [LARGE SCALE GENOMIC DNA]</scope>
    <source>
        <strain>ATCC 17760 / DSM 23089 / LMG 22485 / NCIMB 9086 / R18194 / 383</strain>
    </source>
</reference>
<name>SYDND_BURL3</name>
<comment type="function">
    <text evidence="1">Aspartyl-tRNA synthetase with relaxed tRNA specificity since it is able to aspartylate not only its cognate tRNA(Asp) but also tRNA(Asn). Reaction proceeds in two steps: L-aspartate is first activated by ATP to form Asp-AMP and then transferred to the acceptor end of tRNA(Asp/Asn).</text>
</comment>
<comment type="catalytic activity">
    <reaction evidence="1">
        <text>tRNA(Asx) + L-aspartate + ATP = L-aspartyl-tRNA(Asx) + AMP + diphosphate</text>
        <dbReference type="Rhea" id="RHEA:18349"/>
        <dbReference type="Rhea" id="RHEA-COMP:9710"/>
        <dbReference type="Rhea" id="RHEA-COMP:9711"/>
        <dbReference type="ChEBI" id="CHEBI:29991"/>
        <dbReference type="ChEBI" id="CHEBI:30616"/>
        <dbReference type="ChEBI" id="CHEBI:33019"/>
        <dbReference type="ChEBI" id="CHEBI:78442"/>
        <dbReference type="ChEBI" id="CHEBI:78516"/>
        <dbReference type="ChEBI" id="CHEBI:456215"/>
        <dbReference type="EC" id="6.1.1.23"/>
    </reaction>
</comment>
<comment type="subunit">
    <text evidence="1">Homodimer.</text>
</comment>
<comment type="subcellular location">
    <subcellularLocation>
        <location evidence="1">Cytoplasm</location>
    </subcellularLocation>
</comment>
<comment type="similarity">
    <text evidence="1">Belongs to the class-II aminoacyl-tRNA synthetase family. Type 1 subfamily.</text>
</comment>
<keyword id="KW-0030">Aminoacyl-tRNA synthetase</keyword>
<keyword id="KW-0067">ATP-binding</keyword>
<keyword id="KW-0963">Cytoplasm</keyword>
<keyword id="KW-0436">Ligase</keyword>
<keyword id="KW-0547">Nucleotide-binding</keyword>
<keyword id="KW-0648">Protein biosynthesis</keyword>
<feature type="chain" id="PRO_0000235514" description="Aspartate--tRNA(Asp/Asn) ligase">
    <location>
        <begin position="1"/>
        <end position="600"/>
    </location>
</feature>
<feature type="region of interest" description="Aspartate" evidence="1">
    <location>
        <begin position="198"/>
        <end position="201"/>
    </location>
</feature>
<feature type="binding site" evidence="1">
    <location>
        <position position="174"/>
    </location>
    <ligand>
        <name>L-aspartate</name>
        <dbReference type="ChEBI" id="CHEBI:29991"/>
    </ligand>
</feature>
<feature type="binding site" evidence="1">
    <location>
        <begin position="220"/>
        <end position="222"/>
    </location>
    <ligand>
        <name>ATP</name>
        <dbReference type="ChEBI" id="CHEBI:30616"/>
    </ligand>
</feature>
<feature type="binding site" evidence="1">
    <location>
        <position position="220"/>
    </location>
    <ligand>
        <name>L-aspartate</name>
        <dbReference type="ChEBI" id="CHEBI:29991"/>
    </ligand>
</feature>
<feature type="binding site" evidence="1">
    <location>
        <position position="229"/>
    </location>
    <ligand>
        <name>ATP</name>
        <dbReference type="ChEBI" id="CHEBI:30616"/>
    </ligand>
</feature>
<feature type="binding site" evidence="1">
    <location>
        <position position="457"/>
    </location>
    <ligand>
        <name>L-aspartate</name>
        <dbReference type="ChEBI" id="CHEBI:29991"/>
    </ligand>
</feature>
<feature type="binding site" evidence="1">
    <location>
        <position position="491"/>
    </location>
    <ligand>
        <name>ATP</name>
        <dbReference type="ChEBI" id="CHEBI:30616"/>
    </ligand>
</feature>
<feature type="binding site" evidence="1">
    <location>
        <position position="498"/>
    </location>
    <ligand>
        <name>L-aspartate</name>
        <dbReference type="ChEBI" id="CHEBI:29991"/>
    </ligand>
</feature>
<feature type="binding site" evidence="1">
    <location>
        <begin position="543"/>
        <end position="546"/>
    </location>
    <ligand>
        <name>ATP</name>
        <dbReference type="ChEBI" id="CHEBI:30616"/>
    </ligand>
</feature>
<feature type="site" description="Important for tRNA non-discrimination" evidence="1">
    <location>
        <position position="32"/>
    </location>
</feature>
<feature type="site" description="Important for tRNA non-discrimination" evidence="1">
    <location>
        <position position="83"/>
    </location>
</feature>
<accession>Q39D20</accession>
<protein>
    <recommendedName>
        <fullName evidence="1">Aspartate--tRNA(Asp/Asn) ligase</fullName>
        <ecNumber evidence="1">6.1.1.23</ecNumber>
    </recommendedName>
    <alternativeName>
        <fullName evidence="1">Aspartyl-tRNA synthetase</fullName>
        <shortName evidence="1">AspRS</shortName>
    </alternativeName>
    <alternativeName>
        <fullName evidence="1">Non-discriminating aspartyl-tRNA synthetase</fullName>
        <shortName evidence="1">ND-AspRS</shortName>
    </alternativeName>
</protein>
<organism>
    <name type="scientific">Burkholderia lata (strain ATCC 17760 / DSM 23089 / LMG 22485 / NCIMB 9086 / R18194 / 383)</name>
    <dbReference type="NCBI Taxonomy" id="482957"/>
    <lineage>
        <taxon>Bacteria</taxon>
        <taxon>Pseudomonadati</taxon>
        <taxon>Pseudomonadota</taxon>
        <taxon>Betaproteobacteria</taxon>
        <taxon>Burkholderiales</taxon>
        <taxon>Burkholderiaceae</taxon>
        <taxon>Burkholderia</taxon>
        <taxon>Burkholderia cepacia complex</taxon>
    </lineage>
</organism>
<evidence type="ECO:0000255" key="1">
    <source>
        <dbReference type="HAMAP-Rule" id="MF_00044"/>
    </source>
</evidence>
<dbReference type="EC" id="6.1.1.23" evidence="1"/>
<dbReference type="EMBL" id="CP000151">
    <property type="protein sequence ID" value="ABB09646.1"/>
    <property type="molecule type" value="Genomic_DNA"/>
</dbReference>
<dbReference type="RefSeq" id="WP_011353156.1">
    <property type="nucleotide sequence ID" value="NZ_WNDV01000023.1"/>
</dbReference>
<dbReference type="SMR" id="Q39D20"/>
<dbReference type="GeneID" id="45095935"/>
<dbReference type="KEGG" id="bur:Bcep18194_A6052"/>
<dbReference type="PATRIC" id="fig|482957.22.peg.3053"/>
<dbReference type="HOGENOM" id="CLU_014330_3_2_4"/>
<dbReference type="Proteomes" id="UP000002705">
    <property type="component" value="Chromosome 1"/>
</dbReference>
<dbReference type="GO" id="GO:0005737">
    <property type="term" value="C:cytoplasm"/>
    <property type="evidence" value="ECO:0007669"/>
    <property type="project" value="UniProtKB-SubCell"/>
</dbReference>
<dbReference type="GO" id="GO:0004815">
    <property type="term" value="F:aspartate-tRNA ligase activity"/>
    <property type="evidence" value="ECO:0007669"/>
    <property type="project" value="UniProtKB-UniRule"/>
</dbReference>
<dbReference type="GO" id="GO:0050560">
    <property type="term" value="F:aspartate-tRNA(Asn) ligase activity"/>
    <property type="evidence" value="ECO:0007669"/>
    <property type="project" value="UniProtKB-EC"/>
</dbReference>
<dbReference type="GO" id="GO:0005524">
    <property type="term" value="F:ATP binding"/>
    <property type="evidence" value="ECO:0007669"/>
    <property type="project" value="UniProtKB-UniRule"/>
</dbReference>
<dbReference type="GO" id="GO:0003676">
    <property type="term" value="F:nucleic acid binding"/>
    <property type="evidence" value="ECO:0007669"/>
    <property type="project" value="InterPro"/>
</dbReference>
<dbReference type="GO" id="GO:0006422">
    <property type="term" value="P:aspartyl-tRNA aminoacylation"/>
    <property type="evidence" value="ECO:0007669"/>
    <property type="project" value="UniProtKB-UniRule"/>
</dbReference>
<dbReference type="CDD" id="cd00777">
    <property type="entry name" value="AspRS_core"/>
    <property type="match status" value="1"/>
</dbReference>
<dbReference type="CDD" id="cd04317">
    <property type="entry name" value="EcAspRS_like_N"/>
    <property type="match status" value="1"/>
</dbReference>
<dbReference type="Gene3D" id="3.30.930.10">
    <property type="entry name" value="Bira Bifunctional Protein, Domain 2"/>
    <property type="match status" value="1"/>
</dbReference>
<dbReference type="Gene3D" id="3.30.1360.30">
    <property type="entry name" value="GAD-like domain"/>
    <property type="match status" value="1"/>
</dbReference>
<dbReference type="Gene3D" id="2.40.50.140">
    <property type="entry name" value="Nucleic acid-binding proteins"/>
    <property type="match status" value="1"/>
</dbReference>
<dbReference type="HAMAP" id="MF_00044">
    <property type="entry name" value="Asp_tRNA_synth_type1"/>
    <property type="match status" value="1"/>
</dbReference>
<dbReference type="InterPro" id="IPR004364">
    <property type="entry name" value="Aa-tRNA-synt_II"/>
</dbReference>
<dbReference type="InterPro" id="IPR006195">
    <property type="entry name" value="aa-tRNA-synth_II"/>
</dbReference>
<dbReference type="InterPro" id="IPR045864">
    <property type="entry name" value="aa-tRNA-synth_II/BPL/LPL"/>
</dbReference>
<dbReference type="InterPro" id="IPR004524">
    <property type="entry name" value="Asp-tRNA-ligase_1"/>
</dbReference>
<dbReference type="InterPro" id="IPR047089">
    <property type="entry name" value="Asp-tRNA-ligase_1_N"/>
</dbReference>
<dbReference type="InterPro" id="IPR002312">
    <property type="entry name" value="Asp/Asn-tRNA-synth_IIb"/>
</dbReference>
<dbReference type="InterPro" id="IPR047090">
    <property type="entry name" value="AspRS_core"/>
</dbReference>
<dbReference type="InterPro" id="IPR004115">
    <property type="entry name" value="GAD-like_sf"/>
</dbReference>
<dbReference type="InterPro" id="IPR029351">
    <property type="entry name" value="GAD_dom"/>
</dbReference>
<dbReference type="InterPro" id="IPR012340">
    <property type="entry name" value="NA-bd_OB-fold"/>
</dbReference>
<dbReference type="InterPro" id="IPR004365">
    <property type="entry name" value="NA-bd_OB_tRNA"/>
</dbReference>
<dbReference type="NCBIfam" id="TIGR00459">
    <property type="entry name" value="aspS_bact"/>
    <property type="match status" value="1"/>
</dbReference>
<dbReference type="NCBIfam" id="NF001750">
    <property type="entry name" value="PRK00476.1"/>
    <property type="match status" value="1"/>
</dbReference>
<dbReference type="PANTHER" id="PTHR22594:SF5">
    <property type="entry name" value="ASPARTATE--TRNA LIGASE, MITOCHONDRIAL"/>
    <property type="match status" value="1"/>
</dbReference>
<dbReference type="PANTHER" id="PTHR22594">
    <property type="entry name" value="ASPARTYL/LYSYL-TRNA SYNTHETASE"/>
    <property type="match status" value="1"/>
</dbReference>
<dbReference type="Pfam" id="PF02938">
    <property type="entry name" value="GAD"/>
    <property type="match status" value="1"/>
</dbReference>
<dbReference type="Pfam" id="PF00152">
    <property type="entry name" value="tRNA-synt_2"/>
    <property type="match status" value="1"/>
</dbReference>
<dbReference type="Pfam" id="PF01336">
    <property type="entry name" value="tRNA_anti-codon"/>
    <property type="match status" value="1"/>
</dbReference>
<dbReference type="PRINTS" id="PR01042">
    <property type="entry name" value="TRNASYNTHASP"/>
</dbReference>
<dbReference type="SUPFAM" id="SSF55681">
    <property type="entry name" value="Class II aaRS and biotin synthetases"/>
    <property type="match status" value="1"/>
</dbReference>
<dbReference type="SUPFAM" id="SSF55261">
    <property type="entry name" value="GAD domain-like"/>
    <property type="match status" value="1"/>
</dbReference>
<dbReference type="SUPFAM" id="SSF50249">
    <property type="entry name" value="Nucleic acid-binding proteins"/>
    <property type="match status" value="1"/>
</dbReference>
<dbReference type="PROSITE" id="PS50862">
    <property type="entry name" value="AA_TRNA_LIGASE_II"/>
    <property type="match status" value="1"/>
</dbReference>
<gene>
    <name evidence="1" type="primary">aspS</name>
    <name type="ordered locus">Bcep18194_A6052</name>
</gene>
<sequence>MSMRTEYCGLVTEHLLGQTVSLCGWVQRRRDHGGVIFIDLRDREGLVQVVCDPDRAEMFATAEGVRNEFCVQIKGLVRNRPEGTVNAGLKSGKIEVLCHELNVLNASVTPPFQLDDDNLSETTRLTHRVLDLRRPQMQHNLRLRYRVAIEARKYLDEQGFIDIETPMLTKSTPEGARDYLVPSRTNAGQFFALPQSPQLFKQLLMVANFDRYYQITKCFRDEDLRADRQPEFTQIDCETSFLGEQEIRDLFEDMIRHIFKTTIDVELDATFPVMPYSEAMARFGSDKPDLRVQLEFTELTDAMKDVDFKVFSTPANAKDGRVAALRVPKGSELSRGDIDGYTEFVRIYGAKGLAWIKVNEKAKGRDGLQSPIVKNLHDASIAAILERTGAEDGDIIFFAADRAKVVNDSLGALRLKIGHSEFGKANGLVHAGWKPLWVVDFPMFEYDDEDARYVAAHHPFTSPKDEHLEYLETDPGRCLAKAYDMVLNGWEIGGGSVRIHREEVQSKVFRALKIGAEEAQLKFGFLLDALQYGAPPHGGIAFGLDRIVTMMAGADSIRDVIAFPKTQRAQDLLTQAPSPVDERQLRELHIRLRQPEQPKA</sequence>
<proteinExistence type="inferred from homology"/>